<comment type="similarity">
    <text evidence="1">Belongs to the universal ribosomal protein uL29 family.</text>
</comment>
<keyword id="KW-0687">Ribonucleoprotein</keyword>
<keyword id="KW-0689">Ribosomal protein</keyword>
<accession>B3GZ19</accession>
<name>RL29_ACTP7</name>
<proteinExistence type="inferred from homology"/>
<organism>
    <name type="scientific">Actinobacillus pleuropneumoniae serotype 7 (strain AP76)</name>
    <dbReference type="NCBI Taxonomy" id="537457"/>
    <lineage>
        <taxon>Bacteria</taxon>
        <taxon>Pseudomonadati</taxon>
        <taxon>Pseudomonadota</taxon>
        <taxon>Gammaproteobacteria</taxon>
        <taxon>Pasteurellales</taxon>
        <taxon>Pasteurellaceae</taxon>
        <taxon>Actinobacillus</taxon>
    </lineage>
</organism>
<dbReference type="EMBL" id="CP001091">
    <property type="protein sequence ID" value="ACE62505.1"/>
    <property type="molecule type" value="Genomic_DNA"/>
</dbReference>
<dbReference type="RefSeq" id="WP_005599295.1">
    <property type="nucleotide sequence ID" value="NC_010939.1"/>
</dbReference>
<dbReference type="SMR" id="B3GZ19"/>
<dbReference type="GeneID" id="92743647"/>
<dbReference type="KEGG" id="apa:APP7_1853"/>
<dbReference type="HOGENOM" id="CLU_158491_1_2_6"/>
<dbReference type="Proteomes" id="UP000001226">
    <property type="component" value="Chromosome"/>
</dbReference>
<dbReference type="GO" id="GO:0022625">
    <property type="term" value="C:cytosolic large ribosomal subunit"/>
    <property type="evidence" value="ECO:0007669"/>
    <property type="project" value="TreeGrafter"/>
</dbReference>
<dbReference type="GO" id="GO:0003735">
    <property type="term" value="F:structural constituent of ribosome"/>
    <property type="evidence" value="ECO:0007669"/>
    <property type="project" value="InterPro"/>
</dbReference>
<dbReference type="GO" id="GO:0006412">
    <property type="term" value="P:translation"/>
    <property type="evidence" value="ECO:0007669"/>
    <property type="project" value="UniProtKB-UniRule"/>
</dbReference>
<dbReference type="CDD" id="cd00427">
    <property type="entry name" value="Ribosomal_L29_HIP"/>
    <property type="match status" value="1"/>
</dbReference>
<dbReference type="FunFam" id="1.10.287.310:FF:000001">
    <property type="entry name" value="50S ribosomal protein L29"/>
    <property type="match status" value="1"/>
</dbReference>
<dbReference type="Gene3D" id="1.10.287.310">
    <property type="match status" value="1"/>
</dbReference>
<dbReference type="HAMAP" id="MF_00374">
    <property type="entry name" value="Ribosomal_uL29"/>
    <property type="match status" value="1"/>
</dbReference>
<dbReference type="InterPro" id="IPR050063">
    <property type="entry name" value="Ribosomal_protein_uL29"/>
</dbReference>
<dbReference type="InterPro" id="IPR001854">
    <property type="entry name" value="Ribosomal_uL29"/>
</dbReference>
<dbReference type="InterPro" id="IPR018254">
    <property type="entry name" value="Ribosomal_uL29_CS"/>
</dbReference>
<dbReference type="InterPro" id="IPR036049">
    <property type="entry name" value="Ribosomal_uL29_sf"/>
</dbReference>
<dbReference type="NCBIfam" id="TIGR00012">
    <property type="entry name" value="L29"/>
    <property type="match status" value="1"/>
</dbReference>
<dbReference type="PANTHER" id="PTHR10916">
    <property type="entry name" value="60S RIBOSOMAL PROTEIN L35/50S RIBOSOMAL PROTEIN L29"/>
    <property type="match status" value="1"/>
</dbReference>
<dbReference type="PANTHER" id="PTHR10916:SF0">
    <property type="entry name" value="LARGE RIBOSOMAL SUBUNIT PROTEIN UL29C"/>
    <property type="match status" value="1"/>
</dbReference>
<dbReference type="Pfam" id="PF00831">
    <property type="entry name" value="Ribosomal_L29"/>
    <property type="match status" value="1"/>
</dbReference>
<dbReference type="SUPFAM" id="SSF46561">
    <property type="entry name" value="Ribosomal protein L29 (L29p)"/>
    <property type="match status" value="1"/>
</dbReference>
<dbReference type="PROSITE" id="PS00579">
    <property type="entry name" value="RIBOSOMAL_L29"/>
    <property type="match status" value="1"/>
</dbReference>
<gene>
    <name evidence="1" type="primary">rpmC</name>
    <name type="ordered locus">APP7_1853</name>
</gene>
<sequence>MKAQELRNKNVEELNAELINLLGEQFKLRMQAATGQLQQTHQLKQVRRSIAQVKTVLTEKAGE</sequence>
<feature type="chain" id="PRO_1000121723" description="Large ribosomal subunit protein uL29">
    <location>
        <begin position="1"/>
        <end position="63"/>
    </location>
</feature>
<protein>
    <recommendedName>
        <fullName evidence="1">Large ribosomal subunit protein uL29</fullName>
    </recommendedName>
    <alternativeName>
        <fullName evidence="2">50S ribosomal protein L29</fullName>
    </alternativeName>
</protein>
<evidence type="ECO:0000255" key="1">
    <source>
        <dbReference type="HAMAP-Rule" id="MF_00374"/>
    </source>
</evidence>
<evidence type="ECO:0000305" key="2"/>
<reference key="1">
    <citation type="submission" date="2008-06" db="EMBL/GenBank/DDBJ databases">
        <title>Genome and proteome analysis of A. pleuropneumoniae serotype 7.</title>
        <authorList>
            <person name="Linke B."/>
            <person name="Buettner F."/>
            <person name="Martinez-Arias R."/>
            <person name="Goesmann A."/>
            <person name="Baltes N."/>
            <person name="Tegetmeyer H."/>
            <person name="Singh M."/>
            <person name="Gerlach G.F."/>
        </authorList>
    </citation>
    <scope>NUCLEOTIDE SEQUENCE [LARGE SCALE GENOMIC DNA]</scope>
    <source>
        <strain>AP76</strain>
    </source>
</reference>